<proteinExistence type="evidence at protein level"/>
<organism>
    <name type="scientific">Arabidopsis thaliana</name>
    <name type="common">Mouse-ear cress</name>
    <dbReference type="NCBI Taxonomy" id="3702"/>
    <lineage>
        <taxon>Eukaryota</taxon>
        <taxon>Viridiplantae</taxon>
        <taxon>Streptophyta</taxon>
        <taxon>Embryophyta</taxon>
        <taxon>Tracheophyta</taxon>
        <taxon>Spermatophyta</taxon>
        <taxon>Magnoliopsida</taxon>
        <taxon>eudicotyledons</taxon>
        <taxon>Gunneridae</taxon>
        <taxon>Pentapetalae</taxon>
        <taxon>rosids</taxon>
        <taxon>malvids</taxon>
        <taxon>Brassicales</taxon>
        <taxon>Brassicaceae</taxon>
        <taxon>Camelineae</taxon>
        <taxon>Arabidopsis</taxon>
    </lineage>
</organism>
<evidence type="ECO:0000250" key="1">
    <source>
        <dbReference type="UniProtKB" id="F4JMV6"/>
    </source>
</evidence>
<evidence type="ECO:0000250" key="2">
    <source>
        <dbReference type="UniProtKB" id="Q9SF32"/>
    </source>
</evidence>
<evidence type="ECO:0000255" key="3">
    <source>
        <dbReference type="PROSITE-ProRule" id="PRU00116"/>
    </source>
</evidence>
<evidence type="ECO:0000255" key="4">
    <source>
        <dbReference type="PROSITE-ProRule" id="PRU00768"/>
    </source>
</evidence>
<evidence type="ECO:0000269" key="5">
    <source>
    </source>
</evidence>
<evidence type="ECO:0000303" key="6">
    <source>
    </source>
</evidence>
<evidence type="ECO:0000305" key="7"/>
<evidence type="ECO:0000312" key="8">
    <source>
        <dbReference type="Araport" id="AT5G03960"/>
    </source>
</evidence>
<evidence type="ECO:0000312" key="9">
    <source>
        <dbReference type="EMBL" id="CAB85516.1"/>
    </source>
</evidence>
<reference key="1">
    <citation type="journal article" date="2000" name="Nature">
        <title>Sequence and analysis of chromosome 5 of the plant Arabidopsis thaliana.</title>
        <authorList>
            <person name="Tabata S."/>
            <person name="Kaneko T."/>
            <person name="Nakamura Y."/>
            <person name="Kotani H."/>
            <person name="Kato T."/>
            <person name="Asamizu E."/>
            <person name="Miyajima N."/>
            <person name="Sasamoto S."/>
            <person name="Kimura T."/>
            <person name="Hosouchi T."/>
            <person name="Kawashima K."/>
            <person name="Kohara M."/>
            <person name="Matsumoto M."/>
            <person name="Matsuno A."/>
            <person name="Muraki A."/>
            <person name="Nakayama S."/>
            <person name="Nakazaki N."/>
            <person name="Naruo K."/>
            <person name="Okumura S."/>
            <person name="Shinpo S."/>
            <person name="Takeuchi C."/>
            <person name="Wada T."/>
            <person name="Watanabe A."/>
            <person name="Yamada M."/>
            <person name="Yasuda M."/>
            <person name="Sato S."/>
            <person name="de la Bastide M."/>
            <person name="Huang E."/>
            <person name="Spiegel L."/>
            <person name="Gnoj L."/>
            <person name="O'Shaughnessy A."/>
            <person name="Preston R."/>
            <person name="Habermann K."/>
            <person name="Murray J."/>
            <person name="Johnson D."/>
            <person name="Rohlfing T."/>
            <person name="Nelson J."/>
            <person name="Stoneking T."/>
            <person name="Pepin K."/>
            <person name="Spieth J."/>
            <person name="Sekhon M."/>
            <person name="Armstrong J."/>
            <person name="Becker M."/>
            <person name="Belter E."/>
            <person name="Cordum H."/>
            <person name="Cordes M."/>
            <person name="Courtney L."/>
            <person name="Courtney W."/>
            <person name="Dante M."/>
            <person name="Du H."/>
            <person name="Edwards J."/>
            <person name="Fryman J."/>
            <person name="Haakensen B."/>
            <person name="Lamar E."/>
            <person name="Latreille P."/>
            <person name="Leonard S."/>
            <person name="Meyer R."/>
            <person name="Mulvaney E."/>
            <person name="Ozersky P."/>
            <person name="Riley A."/>
            <person name="Strowmatt C."/>
            <person name="Wagner-McPherson C."/>
            <person name="Wollam A."/>
            <person name="Yoakum M."/>
            <person name="Bell M."/>
            <person name="Dedhia N."/>
            <person name="Parnell L."/>
            <person name="Shah R."/>
            <person name="Rodriguez M."/>
            <person name="Hoon See L."/>
            <person name="Vil D."/>
            <person name="Baker J."/>
            <person name="Kirchoff K."/>
            <person name="Toth K."/>
            <person name="King L."/>
            <person name="Bahret A."/>
            <person name="Miller B."/>
            <person name="Marra M.A."/>
            <person name="Martienssen R."/>
            <person name="McCombie W.R."/>
            <person name="Wilson R.K."/>
            <person name="Murphy G."/>
            <person name="Bancroft I."/>
            <person name="Volckaert G."/>
            <person name="Wambutt R."/>
            <person name="Duesterhoeft A."/>
            <person name="Stiekema W."/>
            <person name="Pohl T."/>
            <person name="Entian K.-D."/>
            <person name="Terryn N."/>
            <person name="Hartley N."/>
            <person name="Bent E."/>
            <person name="Johnson S."/>
            <person name="Langham S.-A."/>
            <person name="McCullagh B."/>
            <person name="Robben J."/>
            <person name="Grymonprez B."/>
            <person name="Zimmermann W."/>
            <person name="Ramsperger U."/>
            <person name="Wedler H."/>
            <person name="Balke K."/>
            <person name="Wedler E."/>
            <person name="Peters S."/>
            <person name="van Staveren M."/>
            <person name="Dirkse W."/>
            <person name="Mooijman P."/>
            <person name="Klein Lankhorst R."/>
            <person name="Weitzenegger T."/>
            <person name="Bothe G."/>
            <person name="Rose M."/>
            <person name="Hauf J."/>
            <person name="Berneiser S."/>
            <person name="Hempel S."/>
            <person name="Feldpausch M."/>
            <person name="Lamberth S."/>
            <person name="Villarroel R."/>
            <person name="Gielen J."/>
            <person name="Ardiles W."/>
            <person name="Bents O."/>
            <person name="Lemcke K."/>
            <person name="Kolesov G."/>
            <person name="Mayer K.F.X."/>
            <person name="Rudd S."/>
            <person name="Schoof H."/>
            <person name="Schueller C."/>
            <person name="Zaccaria P."/>
            <person name="Mewes H.-W."/>
            <person name="Bevan M."/>
            <person name="Fransz P.F."/>
        </authorList>
    </citation>
    <scope>NUCLEOTIDE SEQUENCE [LARGE SCALE GENOMIC DNA]</scope>
    <source>
        <strain>cv. Columbia</strain>
    </source>
</reference>
<reference key="2">
    <citation type="journal article" date="2017" name="Plant J.">
        <title>Araport11: a complete reannotation of the Arabidopsis thaliana reference genome.</title>
        <authorList>
            <person name="Cheng C.Y."/>
            <person name="Krishnakumar V."/>
            <person name="Chan A.P."/>
            <person name="Thibaud-Nissen F."/>
            <person name="Schobel S."/>
            <person name="Town C.D."/>
        </authorList>
    </citation>
    <scope>GENOME REANNOTATION</scope>
    <source>
        <strain>cv. Columbia</strain>
    </source>
</reference>
<reference key="3">
    <citation type="journal article" date="2005" name="BMC Evol. Biol.">
        <title>Genome-wide comparative analysis of the IQD gene families in Arabidopsis thaliana and Oryza sativa.</title>
        <authorList>
            <person name="Abel S."/>
            <person name="Savchenko T."/>
            <person name="Levy M."/>
        </authorList>
    </citation>
    <scope>INTERACTION WITH CALMODULIN</scope>
    <scope>GENE FAMILY</scope>
    <scope>NOMENCLATURE</scope>
    <source>
        <strain>cv. Columbia</strain>
    </source>
</reference>
<reference key="4">
    <citation type="journal article" date="2017" name="Plant Physiol.">
        <title>The IQD family of calmodulin-binding proteins links calcium signaling to microtubules, membrane subdomains, and the nucleus.</title>
        <authorList>
            <person name="Buerstenbinder K."/>
            <person name="Moeller B."/>
            <person name="Ploetner R."/>
            <person name="Stamm G."/>
            <person name="Hause G."/>
            <person name="Mitra D."/>
            <person name="Abel S."/>
        </authorList>
    </citation>
    <scope>SUBCELLULAR LOCATION</scope>
    <source>
        <strain>cv. Columbia</strain>
    </source>
</reference>
<reference key="5">
    <citation type="journal article" date="2017" name="Plant Signal. Behav.">
        <title>Functions of IQD proteins as hubs in cellular calcium and auxin signaling: A toolbox for shape formation and tissue-specification in plants?</title>
        <authorList>
            <person name="Buerstenbinder K."/>
            <person name="Mitra D."/>
            <person name="Quegwer J."/>
        </authorList>
    </citation>
    <scope>REVIEW</scope>
</reference>
<accession>A0A1P8BH03</accession>
<accession>Q9LZB4</accession>
<gene>
    <name evidence="6" type="primary">IQD12</name>
    <name evidence="8" type="ordered locus">At5g03960</name>
    <name evidence="9" type="ORF">F8F6.170</name>
</gene>
<name>IQD12_ARATH</name>
<sequence length="404" mass="46169">MAKRRSWFGWMKRLFICEAKARAEKKPRRLRWVFKRLKLRPQLATCGQETRTLNEATQDQRKHAMNVAIATAAAAEAAVAAAKAAAEVVRMAGNAFTSQHFVKKLAPNVAAIKIQSAFRASLARKALRALKALVRLQAIVRGRAVRRKVSALLKSSHSNKASTSNIIQRQTERKHWSNTKSEIKEELQVSNHSLCNSKVKCNGWDSSALTKEDIKAIWLRKQEGVIKRDRMLKYSRSQRERRSPHMLVESLYAKDMGMRSCRLEHWGESKSAKSINSFLIPSEMLVPTKVKLRSLQRQDSGDGQDSPFSFPRRSFSRLEQSILEDESWFQRSNGFQPYMSVTESAREKMRSLSTPRQRVGIMDSLFDNYKKDGDKVSLWSTFVCENSKINNAKKSSLTTYQHNC</sequence>
<feature type="chain" id="PRO_0000453119" description="Protein IQ-DOMAIN 12">
    <location>
        <begin position="1"/>
        <end position="404"/>
    </location>
</feature>
<feature type="domain" description="IQ 1" evidence="3">
    <location>
        <begin position="108"/>
        <end position="135"/>
    </location>
</feature>
<feature type="domain" description="IQ 2" evidence="3">
    <location>
        <begin position="136"/>
        <end position="158"/>
    </location>
</feature>
<feature type="region of interest" description="Calmodulin-binding" evidence="6">
    <location>
        <begin position="8"/>
        <end position="25"/>
    </location>
</feature>
<feature type="short sequence motif" description="Nuclear localization signal 1" evidence="4">
    <location>
        <begin position="11"/>
        <end position="18"/>
    </location>
</feature>
<feature type="short sequence motif" description="Nuclear localization signal 2" evidence="4">
    <location>
        <begin position="226"/>
        <end position="233"/>
    </location>
</feature>
<feature type="splice variant" id="VSP_061103" description="In isoform 2.">
    <location>
        <position position="25"/>
    </location>
</feature>
<comment type="function">
    <text evidence="2">May be involved in cooperative interactions with calmodulins or calmodulin-like proteins (By similarity). Recruits calmodulin proteins to microtubules, thus being a potential scaffold in cellular signaling and trafficking (By similarity). May associate with nucleic acids and regulate gene expression at the transcriptional or post-transcriptional level (By similarity).</text>
</comment>
<comment type="subunit">
    <text evidence="2">Binds to multiple calmodulin (CaM) in the presence of Ca(2+) and CaM-like proteins.</text>
</comment>
<comment type="subcellular location">
    <subcellularLocation>
        <location evidence="4">Nucleus</location>
    </subcellularLocation>
    <subcellularLocation>
        <location evidence="5">Cell membrane</location>
    </subcellularLocation>
    <text evidence="1">Recruits calmodulin (CaM2) at plasma membrane subdomains.</text>
</comment>
<comment type="alternative products">
    <event type="alternative splicing"/>
    <isoform>
        <id>A0A1P8BH03-1</id>
        <name>1</name>
        <sequence type="displayed"/>
    </isoform>
    <isoform>
        <id>A0A1P8BH03-2</id>
        <name>2</name>
        <sequence type="described" ref="VSP_061103"/>
    </isoform>
</comment>
<comment type="similarity">
    <text evidence="7">Belongs to the IQD family.</text>
</comment>
<protein>
    <recommendedName>
        <fullName evidence="6">Protein IQ-DOMAIN 12</fullName>
        <shortName evidence="6">AtIQD12</shortName>
    </recommendedName>
</protein>
<dbReference type="EMBL" id="AL162873">
    <property type="protein sequence ID" value="CAB85516.1"/>
    <property type="molecule type" value="Genomic_DNA"/>
</dbReference>
<dbReference type="EMBL" id="CP002688">
    <property type="protein sequence ID" value="AED90676.1"/>
    <property type="molecule type" value="Genomic_DNA"/>
</dbReference>
<dbReference type="EMBL" id="CP002688">
    <property type="protein sequence ID" value="ANM70876.1"/>
    <property type="molecule type" value="Genomic_DNA"/>
</dbReference>
<dbReference type="EMBL" id="CP002688">
    <property type="protein sequence ID" value="ANM70877.1"/>
    <property type="molecule type" value="Genomic_DNA"/>
</dbReference>
<dbReference type="PIR" id="T48423">
    <property type="entry name" value="T48423"/>
</dbReference>
<dbReference type="RefSeq" id="NP_001332454.1">
    <molecule id="A0A1P8BH03-1"/>
    <property type="nucleotide sequence ID" value="NM_001342739.1"/>
</dbReference>
<dbReference type="RefSeq" id="NP_001332455.1">
    <molecule id="A0A1P8BH03-1"/>
    <property type="nucleotide sequence ID" value="NM_001342740.1"/>
</dbReference>
<dbReference type="RefSeq" id="NP_196016.1">
    <molecule id="A0A1P8BH03-2"/>
    <property type="nucleotide sequence ID" value="NM_120478.4"/>
</dbReference>
<dbReference type="SMR" id="A0A1P8BH03"/>
<dbReference type="FunCoup" id="A0A1P8BH03">
    <property type="interactions" value="6"/>
</dbReference>
<dbReference type="IntAct" id="A0A1P8BH03">
    <property type="interactions" value="1"/>
</dbReference>
<dbReference type="STRING" id="3702.A0A1P8BH03"/>
<dbReference type="iPTMnet" id="A0A1P8BH03"/>
<dbReference type="PaxDb" id="3702-AT5G03960.1"/>
<dbReference type="EnsemblPlants" id="AT5G03960.1">
    <molecule id="A0A1P8BH03-2"/>
    <property type="protein sequence ID" value="AT5G03960.1"/>
    <property type="gene ID" value="AT5G03960"/>
</dbReference>
<dbReference type="EnsemblPlants" id="AT5G03960.2">
    <molecule id="A0A1P8BH03-1"/>
    <property type="protein sequence ID" value="AT5G03960.2"/>
    <property type="gene ID" value="AT5G03960"/>
</dbReference>
<dbReference type="EnsemblPlants" id="AT5G03960.3">
    <molecule id="A0A1P8BH03-1"/>
    <property type="protein sequence ID" value="AT5G03960.3"/>
    <property type="gene ID" value="AT5G03960"/>
</dbReference>
<dbReference type="GeneID" id="830275"/>
<dbReference type="Gramene" id="AT5G03960.1">
    <molecule id="A0A1P8BH03-2"/>
    <property type="protein sequence ID" value="AT5G03960.1"/>
    <property type="gene ID" value="AT5G03960"/>
</dbReference>
<dbReference type="Gramene" id="AT5G03960.2">
    <molecule id="A0A1P8BH03-1"/>
    <property type="protein sequence ID" value="AT5G03960.2"/>
    <property type="gene ID" value="AT5G03960"/>
</dbReference>
<dbReference type="Gramene" id="AT5G03960.3">
    <molecule id="A0A1P8BH03-1"/>
    <property type="protein sequence ID" value="AT5G03960.3"/>
    <property type="gene ID" value="AT5G03960"/>
</dbReference>
<dbReference type="KEGG" id="ath:AT5G03960"/>
<dbReference type="Araport" id="AT5G03960"/>
<dbReference type="TAIR" id="AT5G03960">
    <property type="gene designation" value="IQD12"/>
</dbReference>
<dbReference type="eggNOG" id="ENOG502QS6F">
    <property type="taxonomic scope" value="Eukaryota"/>
</dbReference>
<dbReference type="HOGENOM" id="CLU_024547_0_0_1"/>
<dbReference type="InParanoid" id="A0A1P8BH03"/>
<dbReference type="OMA" id="LQMEQYT"/>
<dbReference type="PRO" id="PR:A0A1P8BH03"/>
<dbReference type="Proteomes" id="UP000006548">
    <property type="component" value="Chromosome 5"/>
</dbReference>
<dbReference type="ExpressionAtlas" id="A0A1P8BH03">
    <property type="expression patterns" value="baseline and differential"/>
</dbReference>
<dbReference type="GO" id="GO:0005634">
    <property type="term" value="C:nucleus"/>
    <property type="evidence" value="ECO:0007669"/>
    <property type="project" value="UniProtKB-SubCell"/>
</dbReference>
<dbReference type="GO" id="GO:0005886">
    <property type="term" value="C:plasma membrane"/>
    <property type="evidence" value="ECO:0007669"/>
    <property type="project" value="UniProtKB-SubCell"/>
</dbReference>
<dbReference type="GO" id="GO:0005516">
    <property type="term" value="F:calmodulin binding"/>
    <property type="evidence" value="ECO:0007669"/>
    <property type="project" value="UniProtKB-KW"/>
</dbReference>
<dbReference type="Gene3D" id="1.20.5.190">
    <property type="match status" value="1"/>
</dbReference>
<dbReference type="InterPro" id="IPR025064">
    <property type="entry name" value="DUF4005"/>
</dbReference>
<dbReference type="InterPro" id="IPR000048">
    <property type="entry name" value="IQ_motif_EF-hand-BS"/>
</dbReference>
<dbReference type="PANTHER" id="PTHR32295:SF212">
    <property type="entry name" value="CALMODULIN BINDING PROTEIN-RELATED"/>
    <property type="match status" value="1"/>
</dbReference>
<dbReference type="PANTHER" id="PTHR32295">
    <property type="entry name" value="IQ-DOMAIN 5-RELATED"/>
    <property type="match status" value="1"/>
</dbReference>
<dbReference type="Pfam" id="PF13178">
    <property type="entry name" value="DUF4005"/>
    <property type="match status" value="1"/>
</dbReference>
<dbReference type="Pfam" id="PF00612">
    <property type="entry name" value="IQ"/>
    <property type="match status" value="1"/>
</dbReference>
<dbReference type="PROSITE" id="PS50096">
    <property type="entry name" value="IQ"/>
    <property type="match status" value="2"/>
</dbReference>
<keyword id="KW-0025">Alternative splicing</keyword>
<keyword id="KW-0112">Calmodulin-binding</keyword>
<keyword id="KW-1003">Cell membrane</keyword>
<keyword id="KW-0472">Membrane</keyword>
<keyword id="KW-0539">Nucleus</keyword>
<keyword id="KW-1185">Reference proteome</keyword>
<keyword id="KW-0677">Repeat</keyword>